<keyword id="KW-0131">Cell cycle</keyword>
<keyword id="KW-0132">Cell division</keyword>
<keyword id="KW-0137">Centromere</keyword>
<keyword id="KW-0158">Chromosome</keyword>
<keyword id="KW-0159">Chromosome partition</keyword>
<keyword id="KW-0175">Coiled coil</keyword>
<keyword id="KW-0539">Nucleus</keyword>
<keyword id="KW-1185">Reference proteome</keyword>
<accession>Q759Q5</accession>
<dbReference type="EMBL" id="AE016817">
    <property type="protein sequence ID" value="AAS52138.2"/>
    <property type="molecule type" value="Genomic_DNA"/>
</dbReference>
<dbReference type="RefSeq" id="NP_984314.2">
    <property type="nucleotide sequence ID" value="NM_209667.2"/>
</dbReference>
<dbReference type="SMR" id="Q759Q5"/>
<dbReference type="FunCoup" id="Q759Q5">
    <property type="interactions" value="186"/>
</dbReference>
<dbReference type="STRING" id="284811.Q759Q5"/>
<dbReference type="EnsemblFungi" id="AAS52138">
    <property type="protein sequence ID" value="AAS52138"/>
    <property type="gene ID" value="AGOS_ADR218W"/>
</dbReference>
<dbReference type="GeneID" id="4620476"/>
<dbReference type="KEGG" id="ago:AGOS_ADR218W"/>
<dbReference type="eggNOG" id="ENOG502QSMK">
    <property type="taxonomic scope" value="Eukaryota"/>
</dbReference>
<dbReference type="HOGENOM" id="CLU_019322_0_0_1"/>
<dbReference type="InParanoid" id="Q759Q5"/>
<dbReference type="OMA" id="HQPKTYR"/>
<dbReference type="OrthoDB" id="5394106at2759"/>
<dbReference type="Proteomes" id="UP000000591">
    <property type="component" value="Chromosome IV"/>
</dbReference>
<dbReference type="GO" id="GO:0000779">
    <property type="term" value="C:condensed chromosome, centromeric region"/>
    <property type="evidence" value="ECO:0007669"/>
    <property type="project" value="UniProtKB-ARBA"/>
</dbReference>
<dbReference type="GO" id="GO:0005634">
    <property type="term" value="C:nucleus"/>
    <property type="evidence" value="ECO:0007669"/>
    <property type="project" value="UniProtKB-SubCell"/>
</dbReference>
<dbReference type="GO" id="GO:0051301">
    <property type="term" value="P:cell division"/>
    <property type="evidence" value="ECO:0007669"/>
    <property type="project" value="UniProtKB-KW"/>
</dbReference>
<dbReference type="GO" id="GO:0045132">
    <property type="term" value="P:meiotic chromosome segregation"/>
    <property type="evidence" value="ECO:0007669"/>
    <property type="project" value="InterPro"/>
</dbReference>
<dbReference type="InterPro" id="IPR011515">
    <property type="entry name" value="Shugoshin_C"/>
</dbReference>
<dbReference type="InterPro" id="IPR011516">
    <property type="entry name" value="Shugoshin_N"/>
</dbReference>
<dbReference type="Pfam" id="PF07557">
    <property type="entry name" value="Shugoshin_C"/>
    <property type="match status" value="1"/>
</dbReference>
<dbReference type="Pfam" id="PF07558">
    <property type="entry name" value="Shugoshin_N"/>
    <property type="match status" value="1"/>
</dbReference>
<name>SGO1_EREGS</name>
<organism>
    <name type="scientific">Eremothecium gossypii (strain ATCC 10895 / CBS 109.51 / FGSC 9923 / NRRL Y-1056)</name>
    <name type="common">Yeast</name>
    <name type="synonym">Ashbya gossypii</name>
    <dbReference type="NCBI Taxonomy" id="284811"/>
    <lineage>
        <taxon>Eukaryota</taxon>
        <taxon>Fungi</taxon>
        <taxon>Dikarya</taxon>
        <taxon>Ascomycota</taxon>
        <taxon>Saccharomycotina</taxon>
        <taxon>Saccharomycetes</taxon>
        <taxon>Saccharomycetales</taxon>
        <taxon>Saccharomycetaceae</taxon>
        <taxon>Eremothecium</taxon>
    </lineage>
</organism>
<sequence>MYKKVVGGWFVYLVSTQISSGRAGSARFGGHLGYPSPSVAYIMARASRKANGSKAKSNSVQEYLDLISLQKQQFDQMRANYSHQNTQLAKSNSMLMIKITDLETKISELVQENVQLRSRLSVTELRFKERLNQSFNLLEHGAFQRFDEIVNLFAVVRAQQGLRPESAAATEQAQRRFKGLEQRGVSPKVVGFDVPSSDSVRGERETLDDRAQQHQEADSMELNVEETQPLRKKRRRSSRRESLFIPSDFDFSNDSLENALKEADKSRSAKDEAPSVAEDTITEEKHRESASRTTEQGESESRTKEASGTLTQSNEDGMGNDKSLQKEGTQQEDAANFTHSIIEYFIPEEYDVGSSDVANTSKSKLEVYRDDNEIESSQSTSSGECKELTGELSSAQPPFVQIPASSQSKIKHSLKPPRTSQRKIVVDEVMPHNDYSDATRPRRTRGKAVDYKWPSLRAKMRRPTDKLVDATTVTDIHELQVPTNRKLRKQREGVADSADVHGETDHEQDPEQSPAAEDVSVGLQSINSNIQKDEVSDQPLQATEVTQALPEDLPLRQPMALKDITNKIHIVQKPKKSLAKKPIIGDVSDENSYYGDDTSASGLRLNEGDLSVFDLIGGVKCSNIPKTHRARAKAERQVGKKPAFKVST</sequence>
<proteinExistence type="inferred from homology"/>
<gene>
    <name type="primary">SGO1</name>
    <name type="ordered locus">ADR218W</name>
</gene>
<evidence type="ECO:0000250" key="1"/>
<evidence type="ECO:0000255" key="2"/>
<evidence type="ECO:0000256" key="3">
    <source>
        <dbReference type="SAM" id="MobiDB-lite"/>
    </source>
</evidence>
<evidence type="ECO:0000305" key="4"/>
<protein>
    <recommendedName>
        <fullName>Shugoshin</fullName>
    </recommendedName>
</protein>
<reference key="1">
    <citation type="journal article" date="2004" name="Science">
        <title>The Ashbya gossypii genome as a tool for mapping the ancient Saccharomyces cerevisiae genome.</title>
        <authorList>
            <person name="Dietrich F.S."/>
            <person name="Voegeli S."/>
            <person name="Brachat S."/>
            <person name="Lerch A."/>
            <person name="Gates K."/>
            <person name="Steiner S."/>
            <person name="Mohr C."/>
            <person name="Poehlmann R."/>
            <person name="Luedi P."/>
            <person name="Choi S."/>
            <person name="Wing R.A."/>
            <person name="Flavier A."/>
            <person name="Gaffney T.D."/>
            <person name="Philippsen P."/>
        </authorList>
    </citation>
    <scope>NUCLEOTIDE SEQUENCE [LARGE SCALE GENOMIC DNA]</scope>
    <source>
        <strain>ATCC 10895 / CBS 109.51 / FGSC 9923 / NRRL Y-1056</strain>
    </source>
</reference>
<reference key="2">
    <citation type="journal article" date="2013" name="G3 (Bethesda)">
        <title>Genomes of Ashbya fungi isolated from insects reveal four mating-type loci, numerous translocations, lack of transposons, and distinct gene duplications.</title>
        <authorList>
            <person name="Dietrich F.S."/>
            <person name="Voegeli S."/>
            <person name="Kuo S."/>
            <person name="Philippsen P."/>
        </authorList>
    </citation>
    <scope>GENOME REANNOTATION</scope>
    <scope>SEQUENCE REVISION TO 264</scope>
    <source>
        <strain>ATCC 10895 / CBS 109.51 / FGSC 9923 / NRRL Y-1056</strain>
    </source>
</reference>
<comment type="function">
    <text evidence="1">Plays a central role in chromosome cohesion during cell division by preventing premature dissociation of cohesin complex from centromeres after prophase, when most of cohesin complex dissociates from chromosomes arms. May act by protecting RAD21 and or REC8 from cleavage by ESP1/separase (By similarity).</text>
</comment>
<comment type="subcellular location">
    <subcellularLocation>
        <location evidence="1">Nucleus</location>
    </subcellularLocation>
    <subcellularLocation>
        <location evidence="1">Chromosome</location>
        <location evidence="1">Centromere</location>
    </subcellularLocation>
</comment>
<comment type="similarity">
    <text evidence="4">Belongs to the shugoshin family.</text>
</comment>
<feature type="chain" id="PRO_0000055445" description="Shugoshin">
    <location>
        <begin position="1"/>
        <end position="648"/>
    </location>
</feature>
<feature type="region of interest" description="Disordered" evidence="3">
    <location>
        <begin position="188"/>
        <end position="239"/>
    </location>
</feature>
<feature type="region of interest" description="Disordered" evidence="3">
    <location>
        <begin position="262"/>
        <end position="334"/>
    </location>
</feature>
<feature type="region of interest" description="Disordered" evidence="3">
    <location>
        <begin position="367"/>
        <end position="443"/>
    </location>
</feature>
<feature type="region of interest" description="Disordered" evidence="3">
    <location>
        <begin position="483"/>
        <end position="518"/>
    </location>
</feature>
<feature type="region of interest" description="Disordered" evidence="3">
    <location>
        <begin position="628"/>
        <end position="648"/>
    </location>
</feature>
<feature type="coiled-coil region" evidence="2">
    <location>
        <begin position="95"/>
        <end position="122"/>
    </location>
</feature>
<feature type="coiled-coil region" evidence="2">
    <location>
        <begin position="208"/>
        <end position="273"/>
    </location>
</feature>
<feature type="compositionally biased region" description="Basic and acidic residues" evidence="3">
    <location>
        <begin position="200"/>
        <end position="217"/>
    </location>
</feature>
<feature type="compositionally biased region" description="Basic and acidic residues" evidence="3">
    <location>
        <begin position="262"/>
        <end position="273"/>
    </location>
</feature>
<feature type="compositionally biased region" description="Polar residues" evidence="3">
    <location>
        <begin position="306"/>
        <end position="315"/>
    </location>
</feature>
<feature type="compositionally biased region" description="Basic and acidic residues" evidence="3">
    <location>
        <begin position="424"/>
        <end position="440"/>
    </location>
</feature>
<feature type="compositionally biased region" description="Basic and acidic residues" evidence="3">
    <location>
        <begin position="490"/>
        <end position="509"/>
    </location>
</feature>